<protein>
    <recommendedName>
        <fullName evidence="5">Lipopolysaccharide core heptose(I) kinase WaaP</fullName>
        <ecNumber evidence="2 3">2.7.1.235</ecNumber>
    </recommendedName>
</protein>
<accession>Q9R9D6</accession>
<keyword id="KW-0067">ATP-binding</keyword>
<keyword id="KW-0997">Cell inner membrane</keyword>
<keyword id="KW-1003">Cell membrane</keyword>
<keyword id="KW-0418">Kinase</keyword>
<keyword id="KW-0448">Lipopolysaccharide biosynthesis</keyword>
<keyword id="KW-0460">Magnesium</keyword>
<keyword id="KW-0472">Membrane</keyword>
<keyword id="KW-0547">Nucleotide-binding</keyword>
<keyword id="KW-0808">Transferase</keyword>
<comment type="function">
    <text evidence="2 3">Kinase involved in the biosynthesis of the core oligosaccharide region of lipopolysaccharide (LPS) (PubMed:11069912, PubMed:9756860). Catalyzes the phosphorylation of heptose I (HepI), the first heptose added to the Kdo2-lipid A module (PubMed:11069912, PubMed:9756860).</text>
</comment>
<comment type="catalytic activity">
    <reaction evidence="2 3">
        <text>an L-alpha-D-Hep-(1-&gt;3)-L-alpha-D-Hep-(1-&gt;5)-[alpha-Kdo-(2-&gt;4)]-alpha-Kdo-(2-&gt;6)-lipid A + ATP = an L-alpha-D-Hep-(1-&gt;3)-4-O-phospho-L-alpha-D-Hep-(1-&gt;5)-[alpha-Kdo-(2-&gt;4)]-alpha-Kdo-(2-&gt;6)-lipid A + ADP + H(+)</text>
        <dbReference type="Rhea" id="RHEA:74087"/>
        <dbReference type="ChEBI" id="CHEBI:15378"/>
        <dbReference type="ChEBI" id="CHEBI:30616"/>
        <dbReference type="ChEBI" id="CHEBI:193069"/>
        <dbReference type="ChEBI" id="CHEBI:193070"/>
        <dbReference type="ChEBI" id="CHEBI:456216"/>
        <dbReference type="EC" id="2.7.1.235"/>
    </reaction>
</comment>
<comment type="catalytic activity">
    <reaction evidence="2 3">
        <text>L-alpha-D-Hep-(1-&gt;3)-L-alpha-D-Hep-(1-&gt;5)-[alpha-Kdo-(2-&gt;4)]-alpha-Kdo-(2-&gt;6)-lipid A (E. coli) + ATP = L-alpha-D-Hep-(1-&gt;3)-4-O-phospho-L-alpha-D-Hep-(1-&gt;5)-[alpha-Kdo-(2-&gt;4)]-alpha-Kdo-(2-&gt;6)-lipid A (E. coli) + ADP + H(+)</text>
        <dbReference type="Rhea" id="RHEA:74091"/>
        <dbReference type="ChEBI" id="CHEBI:15378"/>
        <dbReference type="ChEBI" id="CHEBI:30616"/>
        <dbReference type="ChEBI" id="CHEBI:61507"/>
        <dbReference type="ChEBI" id="CHEBI:193075"/>
        <dbReference type="ChEBI" id="CHEBI:456216"/>
        <dbReference type="EC" id="2.7.1.235"/>
    </reaction>
</comment>
<comment type="cofactor">
    <cofactor evidence="2">
        <name>Mg(2+)</name>
        <dbReference type="ChEBI" id="CHEBI:18420"/>
    </cofactor>
</comment>
<comment type="biophysicochemical properties">
    <kinetics>
        <KM evidence="2">76 uM for lipopolysaccharide acceptor</KM>
        <KM evidence="2">130 uM for ATP</KM>
        <Vmax evidence="2">3.7 nmol/min/mg enzyme</Vmax>
    </kinetics>
    <phDependence>
        <text evidence="2">Optimum pH is 8.0-9.0.</text>
    </phDependence>
</comment>
<comment type="pathway">
    <text evidence="2 3">Bacterial outer membrane biogenesis; LPS core biosynthesis.</text>
</comment>
<comment type="subcellular location">
    <subcellularLocation>
        <location evidence="2">Cell inner membrane</location>
        <topology evidence="6">Peripheral membrane protein</topology>
        <orientation evidence="6">Cytoplasmic side</orientation>
    </subcellularLocation>
</comment>
<comment type="disruption phenotype">
    <text evidence="3">Mutation of the gene results in loss of phosphoryl substituents on HepI and prevents WaaQ and WaaY activity.</text>
</comment>
<comment type="similarity">
    <text evidence="5">Belongs to the protein kinase superfamily. KdkA/RfaP family.</text>
</comment>
<sequence length="265" mass="31051">MVELKEPFATLWRGKDPFEEVKTLQGEVFRELETRRTLRFEMAGKSYFLKWHRGTTLKEIIKNLLSLRMPVLGADREWNAIHRLRDVGVDTMYGVAFGEKGMNPLTRTSFIITEDLTPTISLEDYCADWATNPPDVRVKRMLIKRVATMVRDMHAAGINHRDCYICHFLLHLPFSGKEEELKISVIDLHRAQLRTRVPRRWRDKDLIGLYFSSMNIGLTQRDIWRFMKVYFAAPLKDILKQEQGLLSQAEAKATKIRERTIRKSL</sequence>
<dbReference type="EC" id="2.7.1.235" evidence="2 3"/>
<dbReference type="EMBL" id="AF019746">
    <property type="protein sequence ID" value="AAC69677.1"/>
    <property type="molecule type" value="Genomic_DNA"/>
</dbReference>
<dbReference type="RefSeq" id="WP_001295235.1">
    <property type="nucleotide sequence ID" value="NZ_WXYZ01000001.1"/>
</dbReference>
<dbReference type="SMR" id="Q9R9D6"/>
<dbReference type="STRING" id="585034.ECIAI1_3800"/>
<dbReference type="GeneID" id="75202199"/>
<dbReference type="eggNOG" id="COG0515">
    <property type="taxonomic scope" value="Bacteria"/>
</dbReference>
<dbReference type="UniPathway" id="UPA00958"/>
<dbReference type="GO" id="GO:0005886">
    <property type="term" value="C:plasma membrane"/>
    <property type="evidence" value="ECO:0007669"/>
    <property type="project" value="UniProtKB-SubCell"/>
</dbReference>
<dbReference type="GO" id="GO:0005524">
    <property type="term" value="F:ATP binding"/>
    <property type="evidence" value="ECO:0007669"/>
    <property type="project" value="UniProtKB-KW"/>
</dbReference>
<dbReference type="GO" id="GO:0016301">
    <property type="term" value="F:kinase activity"/>
    <property type="evidence" value="ECO:0007669"/>
    <property type="project" value="UniProtKB-KW"/>
</dbReference>
<dbReference type="GO" id="GO:0009244">
    <property type="term" value="P:lipopolysaccharide core region biosynthetic process"/>
    <property type="evidence" value="ECO:0007669"/>
    <property type="project" value="UniProtKB-UniPathway"/>
</dbReference>
<dbReference type="InterPro" id="IPR011009">
    <property type="entry name" value="Kinase-like_dom_sf"/>
</dbReference>
<dbReference type="InterPro" id="IPR017172">
    <property type="entry name" value="Lsacc_core_hep_kinase_RfaP"/>
</dbReference>
<dbReference type="NCBIfam" id="NF011703">
    <property type="entry name" value="PRK15123.1"/>
    <property type="match status" value="1"/>
</dbReference>
<dbReference type="Pfam" id="PF06293">
    <property type="entry name" value="Kdo"/>
    <property type="match status" value="1"/>
</dbReference>
<dbReference type="PIRSF" id="PIRSF037318">
    <property type="entry name" value="RfaP"/>
    <property type="match status" value="1"/>
</dbReference>
<dbReference type="SUPFAM" id="SSF56112">
    <property type="entry name" value="Protein kinase-like (PK-like)"/>
    <property type="match status" value="1"/>
</dbReference>
<reference key="1">
    <citation type="journal article" date="1998" name="J. Biol. Chem.">
        <title>The assembly system for the outer core portion of R1- and R4-type lipopolysaccharides of Escherichia coli. The R1 core-specific beta-glucosyltransferase provides a novel attachment site for O-polysaccharides.</title>
        <authorList>
            <person name="Heinrichs D.E."/>
            <person name="Yethon J.A."/>
            <person name="Amor P.A."/>
            <person name="Whitfield C."/>
        </authorList>
    </citation>
    <scope>NUCLEOTIDE SEQUENCE [GENOMIC DNA]</scope>
    <source>
        <strain>F470</strain>
    </source>
</reference>
<reference key="2">
    <citation type="journal article" date="1998" name="J. Biol. Chem.">
        <title>Involvement of waaY, waaQ, and waaP in the modification of Escherichia coli lipopolysaccharide and their role in the formation of a stable outer membrane.</title>
        <authorList>
            <person name="Yethon J.A."/>
            <person name="Heinrichs D.E."/>
            <person name="Monteiro M.A."/>
            <person name="Perry M.B."/>
            <person name="Whitfield C."/>
        </authorList>
    </citation>
    <scope>FUNCTION IN LIPOPOLYSACCHARIDE CORE BIOSYNTHESIS</scope>
    <scope>CATALYTIC ACTIVITY</scope>
    <scope>PATHWAY</scope>
    <scope>DISRUPTION PHENOTYPE</scope>
    <source>
        <strain>F470</strain>
    </source>
</reference>
<reference key="3">
    <citation type="journal article" date="2001" name="J. Biol. Chem.">
        <title>Purification and characterization of WaaP from Escherichia coli, a lipopolysaccharide kinase essential for outer membrane stability.</title>
        <authorList>
            <person name="Yethon J.A."/>
            <person name="Whitfield C."/>
        </authorList>
    </citation>
    <scope>FUNCTION</scope>
    <scope>CATALYTIC ACTIVITY</scope>
    <scope>COFACTOR</scope>
    <scope>BIOPHYSICOCHEMICAL PROPERTIES</scope>
    <scope>PATHWAY</scope>
    <scope>SUBCELLULAR LOCATION</scope>
    <scope>MUTAGENESIS OF ASP-162</scope>
    <source>
        <strain>F470</strain>
    </source>
</reference>
<name>WAAP_ECOLX</name>
<gene>
    <name evidence="4" type="primary">waaP</name>
    <name type="synonym">rfaP</name>
</gene>
<evidence type="ECO:0000250" key="1">
    <source>
        <dbReference type="UniProtKB" id="Q9BRS2"/>
    </source>
</evidence>
<evidence type="ECO:0000269" key="2">
    <source>
    </source>
</evidence>
<evidence type="ECO:0000269" key="3">
    <source>
    </source>
</evidence>
<evidence type="ECO:0000303" key="4">
    <source>
    </source>
</evidence>
<evidence type="ECO:0000305" key="5"/>
<evidence type="ECO:0000305" key="6">
    <source>
    </source>
</evidence>
<proteinExistence type="evidence at protein level"/>
<organism>
    <name type="scientific">Escherichia coli</name>
    <dbReference type="NCBI Taxonomy" id="562"/>
    <lineage>
        <taxon>Bacteria</taxon>
        <taxon>Pseudomonadati</taxon>
        <taxon>Pseudomonadota</taxon>
        <taxon>Gammaproteobacteria</taxon>
        <taxon>Enterobacterales</taxon>
        <taxon>Enterobacteriaceae</taxon>
        <taxon>Escherichia</taxon>
    </lineage>
</organism>
<feature type="chain" id="PRO_0000383676" description="Lipopolysaccharide core heptose(I) kinase WaaP">
    <location>
        <begin position="1"/>
        <end position="265"/>
    </location>
</feature>
<feature type="active site" evidence="1">
    <location>
        <position position="162"/>
    </location>
</feature>
<feature type="mutagenesis site" description="No activity." evidence="2">
    <original>D</original>
    <variation>A</variation>
    <location>
        <position position="162"/>
    </location>
</feature>